<keyword id="KW-0687">Ribonucleoprotein</keyword>
<keyword id="KW-0689">Ribosomal protein</keyword>
<keyword id="KW-0694">RNA-binding</keyword>
<keyword id="KW-0699">rRNA-binding</keyword>
<keyword id="KW-0820">tRNA-binding</keyword>
<dbReference type="EMBL" id="AM920689">
    <property type="protein sequence ID" value="CAP52817.1"/>
    <property type="molecule type" value="Genomic_DNA"/>
</dbReference>
<dbReference type="SMR" id="B0RU75"/>
<dbReference type="KEGG" id="xca:xcc-b100_3452"/>
<dbReference type="HOGENOM" id="CLU_078858_2_1_6"/>
<dbReference type="Proteomes" id="UP000001188">
    <property type="component" value="Chromosome"/>
</dbReference>
<dbReference type="GO" id="GO:0022625">
    <property type="term" value="C:cytosolic large ribosomal subunit"/>
    <property type="evidence" value="ECO:0007669"/>
    <property type="project" value="TreeGrafter"/>
</dbReference>
<dbReference type="GO" id="GO:0019843">
    <property type="term" value="F:rRNA binding"/>
    <property type="evidence" value="ECO:0007669"/>
    <property type="project" value="UniProtKB-UniRule"/>
</dbReference>
<dbReference type="GO" id="GO:0003735">
    <property type="term" value="F:structural constituent of ribosome"/>
    <property type="evidence" value="ECO:0007669"/>
    <property type="project" value="InterPro"/>
</dbReference>
<dbReference type="GO" id="GO:0000049">
    <property type="term" value="F:tRNA binding"/>
    <property type="evidence" value="ECO:0007669"/>
    <property type="project" value="UniProtKB-KW"/>
</dbReference>
<dbReference type="GO" id="GO:0006412">
    <property type="term" value="P:translation"/>
    <property type="evidence" value="ECO:0007669"/>
    <property type="project" value="UniProtKB-UniRule"/>
</dbReference>
<dbReference type="CDD" id="cd01433">
    <property type="entry name" value="Ribosomal_L16_L10e"/>
    <property type="match status" value="1"/>
</dbReference>
<dbReference type="FunFam" id="3.90.1170.10:FF:000001">
    <property type="entry name" value="50S ribosomal protein L16"/>
    <property type="match status" value="1"/>
</dbReference>
<dbReference type="Gene3D" id="3.90.1170.10">
    <property type="entry name" value="Ribosomal protein L10e/L16"/>
    <property type="match status" value="1"/>
</dbReference>
<dbReference type="HAMAP" id="MF_01342">
    <property type="entry name" value="Ribosomal_uL16"/>
    <property type="match status" value="1"/>
</dbReference>
<dbReference type="InterPro" id="IPR047873">
    <property type="entry name" value="Ribosomal_uL16"/>
</dbReference>
<dbReference type="InterPro" id="IPR000114">
    <property type="entry name" value="Ribosomal_uL16_bact-type"/>
</dbReference>
<dbReference type="InterPro" id="IPR020798">
    <property type="entry name" value="Ribosomal_uL16_CS"/>
</dbReference>
<dbReference type="InterPro" id="IPR016180">
    <property type="entry name" value="Ribosomal_uL16_dom"/>
</dbReference>
<dbReference type="InterPro" id="IPR036920">
    <property type="entry name" value="Ribosomal_uL16_sf"/>
</dbReference>
<dbReference type="NCBIfam" id="TIGR01164">
    <property type="entry name" value="rplP_bact"/>
    <property type="match status" value="1"/>
</dbReference>
<dbReference type="PANTHER" id="PTHR12220">
    <property type="entry name" value="50S/60S RIBOSOMAL PROTEIN L16"/>
    <property type="match status" value="1"/>
</dbReference>
<dbReference type="PANTHER" id="PTHR12220:SF13">
    <property type="entry name" value="LARGE RIBOSOMAL SUBUNIT PROTEIN UL16M"/>
    <property type="match status" value="1"/>
</dbReference>
<dbReference type="Pfam" id="PF00252">
    <property type="entry name" value="Ribosomal_L16"/>
    <property type="match status" value="1"/>
</dbReference>
<dbReference type="PRINTS" id="PR00060">
    <property type="entry name" value="RIBOSOMALL16"/>
</dbReference>
<dbReference type="SUPFAM" id="SSF54686">
    <property type="entry name" value="Ribosomal protein L16p/L10e"/>
    <property type="match status" value="1"/>
</dbReference>
<dbReference type="PROSITE" id="PS00586">
    <property type="entry name" value="RIBOSOMAL_L16_1"/>
    <property type="match status" value="1"/>
</dbReference>
<dbReference type="PROSITE" id="PS00701">
    <property type="entry name" value="RIBOSOMAL_L16_2"/>
    <property type="match status" value="1"/>
</dbReference>
<gene>
    <name evidence="1" type="primary">rplP</name>
    <name type="ordered locus">xcc-b100_3452</name>
</gene>
<proteinExistence type="inferred from homology"/>
<sequence length="137" mass="15497">MLQPKRTKYRKMHKGRNDGLAWSGNAVSFGEYGLKATAHGQLTARQIEAARRTISRHVKKGGKMWIRVFPDKPITKKPIEVRMGSGKGNVEYWVAQIQPGRMIYEIEGIPEDIAREAFRLAAAKLSVTTTFVTRTVR</sequence>
<feature type="chain" id="PRO_1000143050" description="Large ribosomal subunit protein uL16">
    <location>
        <begin position="1"/>
        <end position="137"/>
    </location>
</feature>
<name>RL16_XANCB</name>
<organism>
    <name type="scientific">Xanthomonas campestris pv. campestris (strain B100)</name>
    <dbReference type="NCBI Taxonomy" id="509169"/>
    <lineage>
        <taxon>Bacteria</taxon>
        <taxon>Pseudomonadati</taxon>
        <taxon>Pseudomonadota</taxon>
        <taxon>Gammaproteobacteria</taxon>
        <taxon>Lysobacterales</taxon>
        <taxon>Lysobacteraceae</taxon>
        <taxon>Xanthomonas</taxon>
    </lineage>
</organism>
<protein>
    <recommendedName>
        <fullName evidence="1">Large ribosomal subunit protein uL16</fullName>
    </recommendedName>
    <alternativeName>
        <fullName evidence="2">50S ribosomal protein L16</fullName>
    </alternativeName>
</protein>
<comment type="function">
    <text evidence="1">Binds 23S rRNA and is also seen to make contacts with the A and possibly P site tRNAs.</text>
</comment>
<comment type="subunit">
    <text evidence="1">Part of the 50S ribosomal subunit.</text>
</comment>
<comment type="similarity">
    <text evidence="1">Belongs to the universal ribosomal protein uL16 family.</text>
</comment>
<evidence type="ECO:0000255" key="1">
    <source>
        <dbReference type="HAMAP-Rule" id="MF_01342"/>
    </source>
</evidence>
<evidence type="ECO:0000305" key="2"/>
<accession>B0RU75</accession>
<reference key="1">
    <citation type="journal article" date="2008" name="J. Biotechnol.">
        <title>The genome of Xanthomonas campestris pv. campestris B100 and its use for the reconstruction of metabolic pathways involved in xanthan biosynthesis.</title>
        <authorList>
            <person name="Vorhoelter F.-J."/>
            <person name="Schneiker S."/>
            <person name="Goesmann A."/>
            <person name="Krause L."/>
            <person name="Bekel T."/>
            <person name="Kaiser O."/>
            <person name="Linke B."/>
            <person name="Patschkowski T."/>
            <person name="Rueckert C."/>
            <person name="Schmid J."/>
            <person name="Sidhu V.K."/>
            <person name="Sieber V."/>
            <person name="Tauch A."/>
            <person name="Watt S.A."/>
            <person name="Weisshaar B."/>
            <person name="Becker A."/>
            <person name="Niehaus K."/>
            <person name="Puehler A."/>
        </authorList>
    </citation>
    <scope>NUCLEOTIDE SEQUENCE [LARGE SCALE GENOMIC DNA]</scope>
    <source>
        <strain>B100</strain>
    </source>
</reference>